<proteinExistence type="evidence at transcript level"/>
<protein>
    <recommendedName>
        <fullName>Somatolactin</fullName>
        <shortName>SL</shortName>
    </recommendedName>
</protein>
<accession>P45642</accession>
<reference key="1">
    <citation type="journal article" date="1994" name="Gene">
        <title>Cloning of a somatolactin-encoding cDNA from sole (Solea senegalensis).</title>
        <authorList>
            <person name="Pendon C."/>
            <person name="Martinez-Barbera J.-P."/>
            <person name="Valdivia M.M."/>
        </authorList>
    </citation>
    <scope>NUCLEOTIDE SEQUENCE [MRNA]</scope>
    <source>
        <tissue>Pituitary</tissue>
    </source>
</reference>
<organism>
    <name type="scientific">Solea senegalensis</name>
    <name type="common">Senegalese sole</name>
    <dbReference type="NCBI Taxonomy" id="28829"/>
    <lineage>
        <taxon>Eukaryota</taxon>
        <taxon>Metazoa</taxon>
        <taxon>Chordata</taxon>
        <taxon>Craniata</taxon>
        <taxon>Vertebrata</taxon>
        <taxon>Euteleostomi</taxon>
        <taxon>Actinopterygii</taxon>
        <taxon>Neopterygii</taxon>
        <taxon>Teleostei</taxon>
        <taxon>Neoteleostei</taxon>
        <taxon>Acanthomorphata</taxon>
        <taxon>Carangaria</taxon>
        <taxon>Pleuronectiformes</taxon>
        <taxon>Pleuronectoidei</taxon>
        <taxon>Soleidae</taxon>
        <taxon>Solea</taxon>
    </lineage>
</organism>
<dbReference type="EMBL" id="U06753">
    <property type="protein sequence ID" value="AAA61873.1"/>
    <property type="molecule type" value="mRNA"/>
</dbReference>
<dbReference type="PIR" id="JC2582">
    <property type="entry name" value="JC2582"/>
</dbReference>
<dbReference type="SMR" id="P45642"/>
<dbReference type="GO" id="GO:0005615">
    <property type="term" value="C:extracellular space"/>
    <property type="evidence" value="ECO:0007669"/>
    <property type="project" value="TreeGrafter"/>
</dbReference>
<dbReference type="GO" id="GO:0070186">
    <property type="term" value="F:growth hormone activity"/>
    <property type="evidence" value="ECO:0007669"/>
    <property type="project" value="TreeGrafter"/>
</dbReference>
<dbReference type="GO" id="GO:0005131">
    <property type="term" value="F:growth hormone receptor binding"/>
    <property type="evidence" value="ECO:0007669"/>
    <property type="project" value="TreeGrafter"/>
</dbReference>
<dbReference type="GO" id="GO:0048513">
    <property type="term" value="P:animal organ development"/>
    <property type="evidence" value="ECO:0007669"/>
    <property type="project" value="TreeGrafter"/>
</dbReference>
<dbReference type="GO" id="GO:0060396">
    <property type="term" value="P:growth hormone receptor signaling pathway"/>
    <property type="evidence" value="ECO:0007669"/>
    <property type="project" value="TreeGrafter"/>
</dbReference>
<dbReference type="GO" id="GO:0045927">
    <property type="term" value="P:positive regulation of growth"/>
    <property type="evidence" value="ECO:0007669"/>
    <property type="project" value="TreeGrafter"/>
</dbReference>
<dbReference type="GO" id="GO:0046427">
    <property type="term" value="P:positive regulation of receptor signaling pathway via JAK-STAT"/>
    <property type="evidence" value="ECO:0007669"/>
    <property type="project" value="TreeGrafter"/>
</dbReference>
<dbReference type="GO" id="GO:0031667">
    <property type="term" value="P:response to nutrient levels"/>
    <property type="evidence" value="ECO:0007669"/>
    <property type="project" value="TreeGrafter"/>
</dbReference>
<dbReference type="FunFam" id="1.20.1250.10:FF:000042">
    <property type="entry name" value="Somatolactin alpha"/>
    <property type="match status" value="1"/>
</dbReference>
<dbReference type="Gene3D" id="1.20.1250.10">
    <property type="match status" value="1"/>
</dbReference>
<dbReference type="InterPro" id="IPR009079">
    <property type="entry name" value="4_helix_cytokine-like_core"/>
</dbReference>
<dbReference type="InterPro" id="IPR001400">
    <property type="entry name" value="Somatotropin/Prolactin"/>
</dbReference>
<dbReference type="InterPro" id="IPR018116">
    <property type="entry name" value="Somatotropin_CS"/>
</dbReference>
<dbReference type="PANTHER" id="PTHR11417:SF3">
    <property type="entry name" value="SOMATOLACTIN ALPHA ISOFORM X1-RELATED"/>
    <property type="match status" value="1"/>
</dbReference>
<dbReference type="PANTHER" id="PTHR11417">
    <property type="entry name" value="SOMATOTROPIN,PROLACTIN"/>
    <property type="match status" value="1"/>
</dbReference>
<dbReference type="Pfam" id="PF00103">
    <property type="entry name" value="Hormone_1"/>
    <property type="match status" value="1"/>
</dbReference>
<dbReference type="PRINTS" id="PR00836">
    <property type="entry name" value="SOMATOTROPIN"/>
</dbReference>
<dbReference type="SUPFAM" id="SSF47266">
    <property type="entry name" value="4-helical cytokines"/>
    <property type="match status" value="1"/>
</dbReference>
<dbReference type="PROSITE" id="PS00266">
    <property type="entry name" value="SOMATOTROPIN_1"/>
    <property type="match status" value="1"/>
</dbReference>
<dbReference type="PROSITE" id="PS00338">
    <property type="entry name" value="SOMATOTROPIN_2"/>
    <property type="match status" value="1"/>
</dbReference>
<comment type="subcellular location">
    <subcellularLocation>
        <location>Secreted</location>
    </subcellularLocation>
</comment>
<comment type="tissue specificity">
    <text>Pituitary gland.</text>
</comment>
<comment type="similarity">
    <text evidence="3">Belongs to the somatotropin/prolactin family.</text>
</comment>
<evidence type="ECO:0000250" key="1"/>
<evidence type="ECO:0000255" key="2"/>
<evidence type="ECO:0000305" key="3"/>
<keyword id="KW-1015">Disulfide bond</keyword>
<keyword id="KW-0325">Glycoprotein</keyword>
<keyword id="KW-0372">Hormone</keyword>
<keyword id="KW-0964">Secreted</keyword>
<keyword id="KW-0732">Signal</keyword>
<sequence length="230" mass="26586">MMTAVKQSGVWAVLLWPYLLAVSIQLDCRDEQGNMSRCPFISQEKLLDRIIQHAELISRISEESCSLFEELFVPFPLRLQRNTVGYACITKALPIPSSKSEIQQISDKWLLQSVLTLVQSWIEPLVYLQTTLDRYDNAPDVLLNKTKWVSEKLVSLEQGVVVLIRKMLDEGTLTTTYNEQDLLQYDVLPDMLESVMRDYTLLSCFKKDAHKMEIFLKLLKCRQTDKFNCA</sequence>
<feature type="signal peptide" evidence="2">
    <location>
        <begin position="1"/>
        <end position="23"/>
    </location>
</feature>
<feature type="chain" id="PRO_0000033076" description="Somatolactin">
    <location>
        <begin position="24"/>
        <end position="230"/>
    </location>
</feature>
<feature type="glycosylation site" description="N-linked (GlcNAc...) asparagine" evidence="2">
    <location>
        <position position="34"/>
    </location>
</feature>
<feature type="glycosylation site" description="N-linked (GlcNAc...) asparagine" evidence="2">
    <location>
        <position position="144"/>
    </location>
</feature>
<feature type="disulfide bond" evidence="1">
    <location>
        <begin position="28"/>
        <end position="38"/>
    </location>
</feature>
<feature type="disulfide bond" evidence="1">
    <location>
        <begin position="88"/>
        <end position="204"/>
    </location>
</feature>
<feature type="disulfide bond" evidence="1">
    <location>
        <begin position="221"/>
        <end position="229"/>
    </location>
</feature>
<name>SOML_SOLSE</name>